<comment type="function">
    <text evidence="1">Cell division factor that enhances FtsZ-ring assembly. Directly interacts with FtsZ and promotes bundling of FtsZ protofilaments, with a reduction in FtsZ GTPase activity.</text>
</comment>
<comment type="subunit">
    <text evidence="1">Interacts with FtsZ.</text>
</comment>
<comment type="subcellular location">
    <subcellularLocation>
        <location evidence="1">Cytoplasm</location>
    </subcellularLocation>
    <text evidence="1">Localizes to mid-cell in an FtsZ-dependent manner.</text>
</comment>
<comment type="similarity">
    <text evidence="1">Belongs to the ZapD family.</text>
</comment>
<proteinExistence type="inferred from homology"/>
<dbReference type="EMBL" id="CP000880">
    <property type="protein sequence ID" value="ABX22703.1"/>
    <property type="molecule type" value="Genomic_DNA"/>
</dbReference>
<dbReference type="SMR" id="A9MQA5"/>
<dbReference type="STRING" id="41514.SARI_02856"/>
<dbReference type="KEGG" id="ses:SARI_02856"/>
<dbReference type="HOGENOM" id="CLU_076303_0_0_6"/>
<dbReference type="Proteomes" id="UP000002084">
    <property type="component" value="Chromosome"/>
</dbReference>
<dbReference type="GO" id="GO:0032153">
    <property type="term" value="C:cell division site"/>
    <property type="evidence" value="ECO:0007669"/>
    <property type="project" value="TreeGrafter"/>
</dbReference>
<dbReference type="GO" id="GO:0005737">
    <property type="term" value="C:cytoplasm"/>
    <property type="evidence" value="ECO:0007669"/>
    <property type="project" value="UniProtKB-SubCell"/>
</dbReference>
<dbReference type="GO" id="GO:0000917">
    <property type="term" value="P:division septum assembly"/>
    <property type="evidence" value="ECO:0007669"/>
    <property type="project" value="UniProtKB-KW"/>
</dbReference>
<dbReference type="GO" id="GO:0043093">
    <property type="term" value="P:FtsZ-dependent cytokinesis"/>
    <property type="evidence" value="ECO:0007669"/>
    <property type="project" value="UniProtKB-UniRule"/>
</dbReference>
<dbReference type="FunFam" id="1.10.3900.10:FF:000001">
    <property type="entry name" value="Cell division protein ZapD"/>
    <property type="match status" value="1"/>
</dbReference>
<dbReference type="FunFam" id="2.60.440.10:FF:000001">
    <property type="entry name" value="Cell division protein ZapD"/>
    <property type="match status" value="1"/>
</dbReference>
<dbReference type="Gene3D" id="1.10.3900.10">
    <property type="entry name" value="YacF-like"/>
    <property type="match status" value="1"/>
</dbReference>
<dbReference type="Gene3D" id="2.60.440.10">
    <property type="entry name" value="YacF-like domains"/>
    <property type="match status" value="1"/>
</dbReference>
<dbReference type="HAMAP" id="MF_01092">
    <property type="entry name" value="ZapD"/>
    <property type="match status" value="1"/>
</dbReference>
<dbReference type="InterPro" id="IPR009777">
    <property type="entry name" value="ZapD"/>
</dbReference>
<dbReference type="InterPro" id="IPR027462">
    <property type="entry name" value="ZapD_C"/>
</dbReference>
<dbReference type="InterPro" id="IPR036268">
    <property type="entry name" value="ZapD_sf"/>
</dbReference>
<dbReference type="NCBIfam" id="NF003653">
    <property type="entry name" value="PRK05287.1-1"/>
    <property type="match status" value="1"/>
</dbReference>
<dbReference type="NCBIfam" id="NF003655">
    <property type="entry name" value="PRK05287.1-3"/>
    <property type="match status" value="1"/>
</dbReference>
<dbReference type="PANTHER" id="PTHR39455">
    <property type="entry name" value="CELL DIVISION PROTEIN ZAPD"/>
    <property type="match status" value="1"/>
</dbReference>
<dbReference type="PANTHER" id="PTHR39455:SF1">
    <property type="entry name" value="CELL DIVISION PROTEIN ZAPD"/>
    <property type="match status" value="1"/>
</dbReference>
<dbReference type="Pfam" id="PF07072">
    <property type="entry name" value="ZapD"/>
    <property type="match status" value="1"/>
</dbReference>
<dbReference type="SUPFAM" id="SSF160950">
    <property type="entry name" value="YacF-like"/>
    <property type="match status" value="1"/>
</dbReference>
<keyword id="KW-0131">Cell cycle</keyword>
<keyword id="KW-0132">Cell division</keyword>
<keyword id="KW-0963">Cytoplasm</keyword>
<keyword id="KW-1185">Reference proteome</keyword>
<keyword id="KW-0717">Septation</keyword>
<name>ZAPD_SALAR</name>
<gene>
    <name evidence="1" type="primary">zapD</name>
    <name type="ordered locus">SARI_02856</name>
</gene>
<protein>
    <recommendedName>
        <fullName evidence="1">Cell division protein ZapD</fullName>
    </recommendedName>
    <alternativeName>
        <fullName evidence="1">Z ring-associated protein D</fullName>
    </alternativeName>
</protein>
<organism>
    <name type="scientific">Salmonella arizonae (strain ATCC BAA-731 / CDC346-86 / RSK2980)</name>
    <dbReference type="NCBI Taxonomy" id="41514"/>
    <lineage>
        <taxon>Bacteria</taxon>
        <taxon>Pseudomonadati</taxon>
        <taxon>Pseudomonadota</taxon>
        <taxon>Gammaproteobacteria</taxon>
        <taxon>Enterobacterales</taxon>
        <taxon>Enterobacteriaceae</taxon>
        <taxon>Salmonella</taxon>
    </lineage>
</organism>
<feature type="chain" id="PRO_1000084787" description="Cell division protein ZapD">
    <location>
        <begin position="1"/>
        <end position="247"/>
    </location>
</feature>
<reference key="1">
    <citation type="submission" date="2007-11" db="EMBL/GenBank/DDBJ databases">
        <authorList>
            <consortium name="The Salmonella enterica serovar Arizonae Genome Sequencing Project"/>
            <person name="McClelland M."/>
            <person name="Sanderson E.K."/>
            <person name="Porwollik S."/>
            <person name="Spieth J."/>
            <person name="Clifton W.S."/>
            <person name="Fulton R."/>
            <person name="Chunyan W."/>
            <person name="Wollam A."/>
            <person name="Shah N."/>
            <person name="Pepin K."/>
            <person name="Bhonagiri V."/>
            <person name="Nash W."/>
            <person name="Johnson M."/>
            <person name="Thiruvilangam P."/>
            <person name="Wilson R."/>
        </authorList>
    </citation>
    <scope>NUCLEOTIDE SEQUENCE [LARGE SCALE GENOMIC DNA]</scope>
    <source>
        <strain>ATCC BAA-731 / CDC346-86 / RSK2980</strain>
    </source>
</reference>
<accession>A9MQA5</accession>
<evidence type="ECO:0000255" key="1">
    <source>
        <dbReference type="HAMAP-Rule" id="MF_01092"/>
    </source>
</evidence>
<sequence length="247" mass="28448">MHTQVLFEHPLNEKMRTWLRIEFLIQQLSINLPIADHAGALHFFRNISDLLDVFERGEVRTELLKELERQQRKLQAWVEVPGVDQDRIEALRQQLKSAGSVLISAPRIGQQLREDRLIALVRQRLSIPGGCCSFDLPTLHIWLHLQQPQRDAQIETWLASLNPLTQALTLVLDLIRNSAPFRKQTSLNGFYQDNGDDADLLRLILTLDSQLYPQISGHKSRFAIRFMPLDSENGLVPERLDFELACC</sequence>